<feature type="chain" id="PRO_1000088963" description="Adenine phosphoribosyltransferase">
    <location>
        <begin position="1"/>
        <end position="177"/>
    </location>
</feature>
<keyword id="KW-0963">Cytoplasm</keyword>
<keyword id="KW-0328">Glycosyltransferase</keyword>
<keyword id="KW-0660">Purine salvage</keyword>
<keyword id="KW-0808">Transferase</keyword>
<sequence length="177" mass="19428">MAIKSRIRTIPDYPKKGIMFRDITTLLKDPVGFRLVIDQLSQHYIENGVDFDMIVGMEARGFIIGGALSYTLGKGFVPIRKPGKLPGEVVDQEYQLEYGTDKVEMHIDALEKGSRVLLVDDLLATGGTAMAGASLVEKVGGVIAEMAFIVNLPDIGGQKKLEEKGYKLFCLTEFEGE</sequence>
<gene>
    <name evidence="1" type="primary">apt</name>
    <name type="ordered locus">Cphamn1_1995</name>
</gene>
<protein>
    <recommendedName>
        <fullName evidence="1">Adenine phosphoribosyltransferase</fullName>
        <shortName evidence="1">APRT</shortName>
        <ecNumber evidence="1">2.4.2.7</ecNumber>
    </recommendedName>
</protein>
<accession>B3EMG7</accession>
<evidence type="ECO:0000255" key="1">
    <source>
        <dbReference type="HAMAP-Rule" id="MF_00004"/>
    </source>
</evidence>
<name>APT_CHLPB</name>
<organism>
    <name type="scientific">Chlorobium phaeobacteroides (strain BS1)</name>
    <dbReference type="NCBI Taxonomy" id="331678"/>
    <lineage>
        <taxon>Bacteria</taxon>
        <taxon>Pseudomonadati</taxon>
        <taxon>Chlorobiota</taxon>
        <taxon>Chlorobiia</taxon>
        <taxon>Chlorobiales</taxon>
        <taxon>Chlorobiaceae</taxon>
        <taxon>Chlorobium/Pelodictyon group</taxon>
        <taxon>Chlorobium</taxon>
    </lineage>
</organism>
<reference key="1">
    <citation type="submission" date="2008-06" db="EMBL/GenBank/DDBJ databases">
        <title>Complete sequence of Chlorobium phaeobacteroides BS1.</title>
        <authorList>
            <consortium name="US DOE Joint Genome Institute"/>
            <person name="Lucas S."/>
            <person name="Copeland A."/>
            <person name="Lapidus A."/>
            <person name="Glavina del Rio T."/>
            <person name="Dalin E."/>
            <person name="Tice H."/>
            <person name="Bruce D."/>
            <person name="Goodwin L."/>
            <person name="Pitluck S."/>
            <person name="Schmutz J."/>
            <person name="Larimer F."/>
            <person name="Land M."/>
            <person name="Hauser L."/>
            <person name="Kyrpides N."/>
            <person name="Ovchinnikova G."/>
            <person name="Li T."/>
            <person name="Liu Z."/>
            <person name="Zhao F."/>
            <person name="Overmann J."/>
            <person name="Bryant D.A."/>
            <person name="Richardson P."/>
        </authorList>
    </citation>
    <scope>NUCLEOTIDE SEQUENCE [LARGE SCALE GENOMIC DNA]</scope>
    <source>
        <strain>BS1</strain>
    </source>
</reference>
<dbReference type="EC" id="2.4.2.7" evidence="1"/>
<dbReference type="EMBL" id="CP001101">
    <property type="protein sequence ID" value="ACE04906.1"/>
    <property type="molecule type" value="Genomic_DNA"/>
</dbReference>
<dbReference type="SMR" id="B3EMG7"/>
<dbReference type="STRING" id="331678.Cphamn1_1995"/>
<dbReference type="KEGG" id="cpb:Cphamn1_1995"/>
<dbReference type="eggNOG" id="COG0503">
    <property type="taxonomic scope" value="Bacteria"/>
</dbReference>
<dbReference type="HOGENOM" id="CLU_063339_3_0_10"/>
<dbReference type="OrthoDB" id="9803963at2"/>
<dbReference type="UniPathway" id="UPA00588">
    <property type="reaction ID" value="UER00646"/>
</dbReference>
<dbReference type="GO" id="GO:0005737">
    <property type="term" value="C:cytoplasm"/>
    <property type="evidence" value="ECO:0007669"/>
    <property type="project" value="UniProtKB-SubCell"/>
</dbReference>
<dbReference type="GO" id="GO:0002055">
    <property type="term" value="F:adenine binding"/>
    <property type="evidence" value="ECO:0007669"/>
    <property type="project" value="TreeGrafter"/>
</dbReference>
<dbReference type="GO" id="GO:0003999">
    <property type="term" value="F:adenine phosphoribosyltransferase activity"/>
    <property type="evidence" value="ECO:0007669"/>
    <property type="project" value="UniProtKB-UniRule"/>
</dbReference>
<dbReference type="GO" id="GO:0016208">
    <property type="term" value="F:AMP binding"/>
    <property type="evidence" value="ECO:0007669"/>
    <property type="project" value="TreeGrafter"/>
</dbReference>
<dbReference type="GO" id="GO:0006168">
    <property type="term" value="P:adenine salvage"/>
    <property type="evidence" value="ECO:0007669"/>
    <property type="project" value="InterPro"/>
</dbReference>
<dbReference type="GO" id="GO:0044209">
    <property type="term" value="P:AMP salvage"/>
    <property type="evidence" value="ECO:0007669"/>
    <property type="project" value="UniProtKB-UniRule"/>
</dbReference>
<dbReference type="GO" id="GO:0006166">
    <property type="term" value="P:purine ribonucleoside salvage"/>
    <property type="evidence" value="ECO:0007669"/>
    <property type="project" value="UniProtKB-KW"/>
</dbReference>
<dbReference type="CDD" id="cd06223">
    <property type="entry name" value="PRTases_typeI"/>
    <property type="match status" value="1"/>
</dbReference>
<dbReference type="FunFam" id="3.40.50.2020:FF:000021">
    <property type="entry name" value="Adenine phosphoribosyltransferase"/>
    <property type="match status" value="1"/>
</dbReference>
<dbReference type="Gene3D" id="3.40.50.2020">
    <property type="match status" value="1"/>
</dbReference>
<dbReference type="HAMAP" id="MF_00004">
    <property type="entry name" value="Aden_phosphoribosyltr"/>
    <property type="match status" value="1"/>
</dbReference>
<dbReference type="InterPro" id="IPR005764">
    <property type="entry name" value="Ade_phspho_trans"/>
</dbReference>
<dbReference type="InterPro" id="IPR000836">
    <property type="entry name" value="PRibTrfase_dom"/>
</dbReference>
<dbReference type="InterPro" id="IPR029057">
    <property type="entry name" value="PRTase-like"/>
</dbReference>
<dbReference type="InterPro" id="IPR050054">
    <property type="entry name" value="UPRTase/APRTase"/>
</dbReference>
<dbReference type="NCBIfam" id="TIGR01090">
    <property type="entry name" value="apt"/>
    <property type="match status" value="1"/>
</dbReference>
<dbReference type="NCBIfam" id="NF002634">
    <property type="entry name" value="PRK02304.1-3"/>
    <property type="match status" value="1"/>
</dbReference>
<dbReference type="NCBIfam" id="NF002636">
    <property type="entry name" value="PRK02304.1-5"/>
    <property type="match status" value="1"/>
</dbReference>
<dbReference type="PANTHER" id="PTHR32315">
    <property type="entry name" value="ADENINE PHOSPHORIBOSYLTRANSFERASE"/>
    <property type="match status" value="1"/>
</dbReference>
<dbReference type="PANTHER" id="PTHR32315:SF3">
    <property type="entry name" value="ADENINE PHOSPHORIBOSYLTRANSFERASE"/>
    <property type="match status" value="1"/>
</dbReference>
<dbReference type="Pfam" id="PF00156">
    <property type="entry name" value="Pribosyltran"/>
    <property type="match status" value="1"/>
</dbReference>
<dbReference type="SUPFAM" id="SSF53271">
    <property type="entry name" value="PRTase-like"/>
    <property type="match status" value="1"/>
</dbReference>
<dbReference type="PROSITE" id="PS00103">
    <property type="entry name" value="PUR_PYR_PR_TRANSFER"/>
    <property type="match status" value="1"/>
</dbReference>
<proteinExistence type="inferred from homology"/>
<comment type="function">
    <text evidence="1">Catalyzes a salvage reaction resulting in the formation of AMP, that is energically less costly than de novo synthesis.</text>
</comment>
<comment type="catalytic activity">
    <reaction evidence="1">
        <text>AMP + diphosphate = 5-phospho-alpha-D-ribose 1-diphosphate + adenine</text>
        <dbReference type="Rhea" id="RHEA:16609"/>
        <dbReference type="ChEBI" id="CHEBI:16708"/>
        <dbReference type="ChEBI" id="CHEBI:33019"/>
        <dbReference type="ChEBI" id="CHEBI:58017"/>
        <dbReference type="ChEBI" id="CHEBI:456215"/>
        <dbReference type="EC" id="2.4.2.7"/>
    </reaction>
</comment>
<comment type="pathway">
    <text evidence="1">Purine metabolism; AMP biosynthesis via salvage pathway; AMP from adenine: step 1/1.</text>
</comment>
<comment type="subunit">
    <text evidence="1">Homodimer.</text>
</comment>
<comment type="subcellular location">
    <subcellularLocation>
        <location evidence="1">Cytoplasm</location>
    </subcellularLocation>
</comment>
<comment type="similarity">
    <text evidence="1">Belongs to the purine/pyrimidine phosphoribosyltransferase family.</text>
</comment>